<reference key="1">
    <citation type="journal article" date="2008" name="PLoS ONE">
        <title>A recalibrated molecular clock and independent origins for the cholera pandemic clones.</title>
        <authorList>
            <person name="Feng L."/>
            <person name="Reeves P.R."/>
            <person name="Lan R."/>
            <person name="Ren Y."/>
            <person name="Gao C."/>
            <person name="Zhou Z."/>
            <person name="Ren Y."/>
            <person name="Cheng J."/>
            <person name="Wang W."/>
            <person name="Wang J."/>
            <person name="Qian W."/>
            <person name="Li D."/>
            <person name="Wang L."/>
        </authorList>
    </citation>
    <scope>NUCLEOTIDE SEQUENCE [LARGE SCALE GENOMIC DNA]</scope>
    <source>
        <strain>M66-2</strain>
    </source>
</reference>
<organism>
    <name type="scientific">Vibrio cholerae serotype O1 (strain M66-2)</name>
    <dbReference type="NCBI Taxonomy" id="579112"/>
    <lineage>
        <taxon>Bacteria</taxon>
        <taxon>Pseudomonadati</taxon>
        <taxon>Pseudomonadota</taxon>
        <taxon>Gammaproteobacteria</taxon>
        <taxon>Vibrionales</taxon>
        <taxon>Vibrionaceae</taxon>
        <taxon>Vibrio</taxon>
    </lineage>
</organism>
<protein>
    <recommendedName>
        <fullName evidence="1">UPF0231 protein VCM66_0563</fullName>
    </recommendedName>
</protein>
<feature type="chain" id="PRO_1000149634" description="UPF0231 protein VCM66_0563">
    <location>
        <begin position="1"/>
        <end position="126"/>
    </location>
</feature>
<accession>C3LSL0</accession>
<gene>
    <name type="ordered locus">VCM66_0563</name>
</gene>
<proteinExistence type="inferred from homology"/>
<dbReference type="EMBL" id="CP001233">
    <property type="protein sequence ID" value="ACP04886.1"/>
    <property type="molecule type" value="Genomic_DNA"/>
</dbReference>
<dbReference type="RefSeq" id="WP_000393917.1">
    <property type="nucleotide sequence ID" value="NC_012578.1"/>
</dbReference>
<dbReference type="KEGG" id="vcm:VCM66_0563"/>
<dbReference type="HOGENOM" id="CLU_139226_0_0_6"/>
<dbReference type="Proteomes" id="UP000001217">
    <property type="component" value="Chromosome I"/>
</dbReference>
<dbReference type="HAMAP" id="MF_01053">
    <property type="entry name" value="UPF0231"/>
    <property type="match status" value="1"/>
</dbReference>
<dbReference type="InterPro" id="IPR008249">
    <property type="entry name" value="UPF0231"/>
</dbReference>
<dbReference type="NCBIfam" id="NF003577">
    <property type="entry name" value="PRK05248.2-1"/>
    <property type="match status" value="1"/>
</dbReference>
<dbReference type="Pfam" id="PF06062">
    <property type="entry name" value="UPF0231"/>
    <property type="match status" value="1"/>
</dbReference>
<dbReference type="PIRSF" id="PIRSF006287">
    <property type="entry name" value="UCP006287"/>
    <property type="match status" value="1"/>
</dbReference>
<evidence type="ECO:0000255" key="1">
    <source>
        <dbReference type="HAMAP-Rule" id="MF_01053"/>
    </source>
</evidence>
<name>Y563_VIBCM</name>
<sequence>MEFEFIKNTLLGEYAVRCNMEHQIVGRWLQEEIGQDLAKLKHVLTLIDKAEQSPAQEFLWTGREISLLVQGDEITVQENALAYESEHELETDFALYDSESIAACGREDFVALLTQWQSFIQNQGRF</sequence>
<comment type="similarity">
    <text evidence="1">Belongs to the UPF0231 family.</text>
</comment>